<accession>C0MG37</accession>
<name>Y293_STRS7</name>
<feature type="chain" id="PRO_1000212621" description="Probable transcriptional regulatory protein SZO_02930">
    <location>
        <begin position="1"/>
        <end position="238"/>
    </location>
</feature>
<comment type="subcellular location">
    <subcellularLocation>
        <location evidence="1">Cytoplasm</location>
    </subcellularLocation>
</comment>
<comment type="similarity">
    <text evidence="1">Belongs to the TACO1 family. YeeN subfamily.</text>
</comment>
<protein>
    <recommendedName>
        <fullName evidence="1">Probable transcriptional regulatory protein SZO_02930</fullName>
    </recommendedName>
</protein>
<keyword id="KW-0963">Cytoplasm</keyword>
<keyword id="KW-0238">DNA-binding</keyword>
<keyword id="KW-0804">Transcription</keyword>
<keyword id="KW-0805">Transcription regulation</keyword>
<organism>
    <name type="scientific">Streptococcus equi subsp. zooepidemicus (strain H70)</name>
    <dbReference type="NCBI Taxonomy" id="553483"/>
    <lineage>
        <taxon>Bacteria</taxon>
        <taxon>Bacillati</taxon>
        <taxon>Bacillota</taxon>
        <taxon>Bacilli</taxon>
        <taxon>Lactobacillales</taxon>
        <taxon>Streptococcaceae</taxon>
        <taxon>Streptococcus</taxon>
    </lineage>
</organism>
<proteinExistence type="inferred from homology"/>
<reference key="1">
    <citation type="journal article" date="2009" name="PLoS Pathog.">
        <title>Genomic evidence for the evolution of Streptococcus equi: host restriction, increased virulence, and genetic exchange with human pathogens.</title>
        <authorList>
            <person name="Holden M.T.G."/>
            <person name="Heather Z."/>
            <person name="Paillot R."/>
            <person name="Steward K.F."/>
            <person name="Webb K."/>
            <person name="Ainslie F."/>
            <person name="Jourdan T."/>
            <person name="Bason N.C."/>
            <person name="Holroyd N.E."/>
            <person name="Mungall K."/>
            <person name="Quail M.A."/>
            <person name="Sanders M."/>
            <person name="Simmonds M."/>
            <person name="Willey D."/>
            <person name="Brooks K."/>
            <person name="Aanensen D.M."/>
            <person name="Spratt B.G."/>
            <person name="Jolley K.A."/>
            <person name="Maiden M.C.J."/>
            <person name="Kehoe M."/>
            <person name="Chanter N."/>
            <person name="Bentley S.D."/>
            <person name="Robinson C."/>
            <person name="Maskell D.J."/>
            <person name="Parkhill J."/>
            <person name="Waller A.S."/>
        </authorList>
    </citation>
    <scope>NUCLEOTIDE SEQUENCE [LARGE SCALE GENOMIC DNA]</scope>
    <source>
        <strain>H70</strain>
    </source>
</reference>
<gene>
    <name type="ordered locus">SZO_02930</name>
</gene>
<sequence>MGRKWANIVAKKTAKDGATSKVYAKFGVEIYVAAKQGEPDPELNTALKFVIDRAKQAQVPKHVIDKAIDKAKGNTDETFVEGRYEGFGPNGSMIIVDTLTSNVNRTAANVRAAYGKNGGNMGAAGSVSYLFDKKGVIVFKGDDADSIFELLLEADVDVDDVEAEDGSITVYTAPTDLHKAILALRESGISEFQVTELEMIPQSEVTLEGDDLAVFEKLVDALEADDDVQKVYHNVADV</sequence>
<evidence type="ECO:0000255" key="1">
    <source>
        <dbReference type="HAMAP-Rule" id="MF_00918"/>
    </source>
</evidence>
<dbReference type="EMBL" id="FM204884">
    <property type="protein sequence ID" value="CAW98086.1"/>
    <property type="molecule type" value="Genomic_DNA"/>
</dbReference>
<dbReference type="SMR" id="C0MG37"/>
<dbReference type="KEGG" id="seq:SZO_02930"/>
<dbReference type="eggNOG" id="COG0217">
    <property type="taxonomic scope" value="Bacteria"/>
</dbReference>
<dbReference type="HOGENOM" id="CLU_062974_2_0_9"/>
<dbReference type="Proteomes" id="UP000001368">
    <property type="component" value="Chromosome"/>
</dbReference>
<dbReference type="GO" id="GO:0005829">
    <property type="term" value="C:cytosol"/>
    <property type="evidence" value="ECO:0007669"/>
    <property type="project" value="TreeGrafter"/>
</dbReference>
<dbReference type="GO" id="GO:0003677">
    <property type="term" value="F:DNA binding"/>
    <property type="evidence" value="ECO:0007669"/>
    <property type="project" value="UniProtKB-UniRule"/>
</dbReference>
<dbReference type="GO" id="GO:0006355">
    <property type="term" value="P:regulation of DNA-templated transcription"/>
    <property type="evidence" value="ECO:0007669"/>
    <property type="project" value="UniProtKB-UniRule"/>
</dbReference>
<dbReference type="FunFam" id="1.10.10.200:FF:000003">
    <property type="entry name" value="Probable transcriptional regulatory protein YeeN"/>
    <property type="match status" value="1"/>
</dbReference>
<dbReference type="FunFam" id="3.30.70.980:FF:000004">
    <property type="entry name" value="Probable transcriptional regulatory protein YeeN"/>
    <property type="match status" value="1"/>
</dbReference>
<dbReference type="Gene3D" id="1.10.10.200">
    <property type="match status" value="1"/>
</dbReference>
<dbReference type="Gene3D" id="3.30.70.980">
    <property type="match status" value="2"/>
</dbReference>
<dbReference type="HAMAP" id="MF_00693">
    <property type="entry name" value="Transcrip_reg_TACO1"/>
    <property type="match status" value="1"/>
</dbReference>
<dbReference type="HAMAP" id="MF_00918">
    <property type="entry name" value="Transcrip_reg_TACO1_YeeN"/>
    <property type="match status" value="1"/>
</dbReference>
<dbReference type="InterPro" id="IPR017856">
    <property type="entry name" value="Integrase-like_N"/>
</dbReference>
<dbReference type="InterPro" id="IPR048300">
    <property type="entry name" value="TACO1_YebC-like_2nd/3rd_dom"/>
</dbReference>
<dbReference type="InterPro" id="IPR049083">
    <property type="entry name" value="TACO1_YebC_N"/>
</dbReference>
<dbReference type="InterPro" id="IPR002876">
    <property type="entry name" value="Transcrip_reg_TACO1-like"/>
</dbReference>
<dbReference type="InterPro" id="IPR026564">
    <property type="entry name" value="Transcrip_reg_TACO1-like_dom3"/>
</dbReference>
<dbReference type="InterPro" id="IPR026562">
    <property type="entry name" value="Transcrip_reg_TACO1_YeeN"/>
</dbReference>
<dbReference type="InterPro" id="IPR029072">
    <property type="entry name" value="YebC-like"/>
</dbReference>
<dbReference type="NCBIfam" id="NF001030">
    <property type="entry name" value="PRK00110.1"/>
    <property type="match status" value="1"/>
</dbReference>
<dbReference type="NCBIfam" id="NF009044">
    <property type="entry name" value="PRK12378.1"/>
    <property type="match status" value="1"/>
</dbReference>
<dbReference type="NCBIfam" id="TIGR01033">
    <property type="entry name" value="YebC/PmpR family DNA-binding transcriptional regulator"/>
    <property type="match status" value="1"/>
</dbReference>
<dbReference type="PANTHER" id="PTHR12532">
    <property type="entry name" value="TRANSLATIONAL ACTIVATOR OF CYTOCHROME C OXIDASE 1"/>
    <property type="match status" value="1"/>
</dbReference>
<dbReference type="PANTHER" id="PTHR12532:SF0">
    <property type="entry name" value="TRANSLATIONAL ACTIVATOR OF CYTOCHROME C OXIDASE 1"/>
    <property type="match status" value="1"/>
</dbReference>
<dbReference type="Pfam" id="PF20772">
    <property type="entry name" value="TACO1_YebC_N"/>
    <property type="match status" value="1"/>
</dbReference>
<dbReference type="Pfam" id="PF01709">
    <property type="entry name" value="Transcrip_reg"/>
    <property type="match status" value="1"/>
</dbReference>
<dbReference type="SUPFAM" id="SSF75625">
    <property type="entry name" value="YebC-like"/>
    <property type="match status" value="1"/>
</dbReference>